<reference key="1">
    <citation type="submission" date="2006-12" db="EMBL/GenBank/DDBJ databases">
        <title>Complete sequence of Halorhodospira halophila SL1.</title>
        <authorList>
            <consortium name="US DOE Joint Genome Institute"/>
            <person name="Copeland A."/>
            <person name="Lucas S."/>
            <person name="Lapidus A."/>
            <person name="Barry K."/>
            <person name="Detter J.C."/>
            <person name="Glavina del Rio T."/>
            <person name="Hammon N."/>
            <person name="Israni S."/>
            <person name="Dalin E."/>
            <person name="Tice H."/>
            <person name="Pitluck S."/>
            <person name="Saunders E."/>
            <person name="Brettin T."/>
            <person name="Bruce D."/>
            <person name="Han C."/>
            <person name="Tapia R."/>
            <person name="Schmutz J."/>
            <person name="Larimer F."/>
            <person name="Land M."/>
            <person name="Hauser L."/>
            <person name="Kyrpides N."/>
            <person name="Mikhailova N."/>
            <person name="Hoff W."/>
            <person name="Richardson P."/>
        </authorList>
    </citation>
    <scope>NUCLEOTIDE SEQUENCE [LARGE SCALE GENOMIC DNA]</scope>
    <source>
        <strain>DSM 244 / SL1</strain>
    </source>
</reference>
<name>NRDR_HALHL</name>
<comment type="function">
    <text evidence="1">Negatively regulates transcription of bacterial ribonucleotide reductase nrd genes and operons by binding to NrdR-boxes.</text>
</comment>
<comment type="cofactor">
    <cofactor evidence="1">
        <name>Zn(2+)</name>
        <dbReference type="ChEBI" id="CHEBI:29105"/>
    </cofactor>
    <text evidence="1">Binds 1 zinc ion.</text>
</comment>
<comment type="similarity">
    <text evidence="1">Belongs to the NrdR family.</text>
</comment>
<sequence length="155" mass="17935">MRCPYCQNADTRVVDSRLIGEGEQVRRRRQCPSCGERFTTHEAPELVYPRVVKSDGRREAFDEDKLRLGFRRALEKRPVATEAVEAAVRRVCKRVSGAGEREVAANVIGEYVMEELRELDVVAYVRFASVYRRFEDVGAFREVIEGLEQHRRDDD</sequence>
<gene>
    <name evidence="1" type="primary">nrdR</name>
    <name type="ordered locus">Hhal_0901</name>
</gene>
<keyword id="KW-0067">ATP-binding</keyword>
<keyword id="KW-0238">DNA-binding</keyword>
<keyword id="KW-0479">Metal-binding</keyword>
<keyword id="KW-0547">Nucleotide-binding</keyword>
<keyword id="KW-1185">Reference proteome</keyword>
<keyword id="KW-0678">Repressor</keyword>
<keyword id="KW-0804">Transcription</keyword>
<keyword id="KW-0805">Transcription regulation</keyword>
<keyword id="KW-0862">Zinc</keyword>
<keyword id="KW-0863">Zinc-finger</keyword>
<dbReference type="EMBL" id="CP000544">
    <property type="protein sequence ID" value="ABM61677.1"/>
    <property type="molecule type" value="Genomic_DNA"/>
</dbReference>
<dbReference type="RefSeq" id="WP_011813700.1">
    <property type="nucleotide sequence ID" value="NC_008789.1"/>
</dbReference>
<dbReference type="SMR" id="A1WVG5"/>
<dbReference type="STRING" id="349124.Hhal_0901"/>
<dbReference type="KEGG" id="hha:Hhal_0901"/>
<dbReference type="eggNOG" id="COG1327">
    <property type="taxonomic scope" value="Bacteria"/>
</dbReference>
<dbReference type="HOGENOM" id="CLU_108412_0_0_6"/>
<dbReference type="OrthoDB" id="9807461at2"/>
<dbReference type="Proteomes" id="UP000000647">
    <property type="component" value="Chromosome"/>
</dbReference>
<dbReference type="GO" id="GO:0005524">
    <property type="term" value="F:ATP binding"/>
    <property type="evidence" value="ECO:0007669"/>
    <property type="project" value="UniProtKB-KW"/>
</dbReference>
<dbReference type="GO" id="GO:0003677">
    <property type="term" value="F:DNA binding"/>
    <property type="evidence" value="ECO:0007669"/>
    <property type="project" value="UniProtKB-KW"/>
</dbReference>
<dbReference type="GO" id="GO:0008270">
    <property type="term" value="F:zinc ion binding"/>
    <property type="evidence" value="ECO:0007669"/>
    <property type="project" value="UniProtKB-UniRule"/>
</dbReference>
<dbReference type="GO" id="GO:0045892">
    <property type="term" value="P:negative regulation of DNA-templated transcription"/>
    <property type="evidence" value="ECO:0007669"/>
    <property type="project" value="UniProtKB-UniRule"/>
</dbReference>
<dbReference type="HAMAP" id="MF_00440">
    <property type="entry name" value="NrdR"/>
    <property type="match status" value="1"/>
</dbReference>
<dbReference type="InterPro" id="IPR005144">
    <property type="entry name" value="ATP-cone_dom"/>
</dbReference>
<dbReference type="InterPro" id="IPR055173">
    <property type="entry name" value="NrdR-like_N"/>
</dbReference>
<dbReference type="InterPro" id="IPR003796">
    <property type="entry name" value="RNR_NrdR-like"/>
</dbReference>
<dbReference type="NCBIfam" id="TIGR00244">
    <property type="entry name" value="transcriptional regulator NrdR"/>
    <property type="match status" value="1"/>
</dbReference>
<dbReference type="PANTHER" id="PTHR30455">
    <property type="entry name" value="TRANSCRIPTIONAL REPRESSOR NRDR"/>
    <property type="match status" value="1"/>
</dbReference>
<dbReference type="PANTHER" id="PTHR30455:SF2">
    <property type="entry name" value="TRANSCRIPTIONAL REPRESSOR NRDR"/>
    <property type="match status" value="1"/>
</dbReference>
<dbReference type="Pfam" id="PF03477">
    <property type="entry name" value="ATP-cone"/>
    <property type="match status" value="1"/>
</dbReference>
<dbReference type="Pfam" id="PF22811">
    <property type="entry name" value="Zn_ribbon_NrdR"/>
    <property type="match status" value="1"/>
</dbReference>
<dbReference type="PROSITE" id="PS51161">
    <property type="entry name" value="ATP_CONE"/>
    <property type="match status" value="1"/>
</dbReference>
<proteinExistence type="inferred from homology"/>
<evidence type="ECO:0000255" key="1">
    <source>
        <dbReference type="HAMAP-Rule" id="MF_00440"/>
    </source>
</evidence>
<protein>
    <recommendedName>
        <fullName evidence="1">Transcriptional repressor NrdR</fullName>
    </recommendedName>
</protein>
<organism>
    <name type="scientific">Halorhodospira halophila (strain DSM 244 / SL1)</name>
    <name type="common">Ectothiorhodospira halophila (strain DSM 244 / SL1)</name>
    <dbReference type="NCBI Taxonomy" id="349124"/>
    <lineage>
        <taxon>Bacteria</taxon>
        <taxon>Pseudomonadati</taxon>
        <taxon>Pseudomonadota</taxon>
        <taxon>Gammaproteobacteria</taxon>
        <taxon>Chromatiales</taxon>
        <taxon>Ectothiorhodospiraceae</taxon>
        <taxon>Halorhodospira</taxon>
    </lineage>
</organism>
<accession>A1WVG5</accession>
<feature type="chain" id="PRO_1000080757" description="Transcriptional repressor NrdR">
    <location>
        <begin position="1"/>
        <end position="155"/>
    </location>
</feature>
<feature type="domain" description="ATP-cone" evidence="1">
    <location>
        <begin position="49"/>
        <end position="139"/>
    </location>
</feature>
<feature type="zinc finger region" evidence="1">
    <location>
        <begin position="3"/>
        <end position="34"/>
    </location>
</feature>